<reference key="1">
    <citation type="journal article" date="2003" name="Nature">
        <title>The DNA sequence and analysis of human chromosome 6.</title>
        <authorList>
            <person name="Mungall A.J."/>
            <person name="Palmer S.A."/>
            <person name="Sims S.K."/>
            <person name="Edwards C.A."/>
            <person name="Ashurst J.L."/>
            <person name="Wilming L."/>
            <person name="Jones M.C."/>
            <person name="Horton R."/>
            <person name="Hunt S.E."/>
            <person name="Scott C.E."/>
            <person name="Gilbert J.G.R."/>
            <person name="Clamp M.E."/>
            <person name="Bethel G."/>
            <person name="Milne S."/>
            <person name="Ainscough R."/>
            <person name="Almeida J.P."/>
            <person name="Ambrose K.D."/>
            <person name="Andrews T.D."/>
            <person name="Ashwell R.I.S."/>
            <person name="Babbage A.K."/>
            <person name="Bagguley C.L."/>
            <person name="Bailey J."/>
            <person name="Banerjee R."/>
            <person name="Barker D.J."/>
            <person name="Barlow K.F."/>
            <person name="Bates K."/>
            <person name="Beare D.M."/>
            <person name="Beasley H."/>
            <person name="Beasley O."/>
            <person name="Bird C.P."/>
            <person name="Blakey S.E."/>
            <person name="Bray-Allen S."/>
            <person name="Brook J."/>
            <person name="Brown A.J."/>
            <person name="Brown J.Y."/>
            <person name="Burford D.C."/>
            <person name="Burrill W."/>
            <person name="Burton J."/>
            <person name="Carder C."/>
            <person name="Carter N.P."/>
            <person name="Chapman J.C."/>
            <person name="Clark S.Y."/>
            <person name="Clark G."/>
            <person name="Clee C.M."/>
            <person name="Clegg S."/>
            <person name="Cobley V."/>
            <person name="Collier R.E."/>
            <person name="Collins J.E."/>
            <person name="Colman L.K."/>
            <person name="Corby N.R."/>
            <person name="Coville G.J."/>
            <person name="Culley K.M."/>
            <person name="Dhami P."/>
            <person name="Davies J."/>
            <person name="Dunn M."/>
            <person name="Earthrowl M.E."/>
            <person name="Ellington A.E."/>
            <person name="Evans K.A."/>
            <person name="Faulkner L."/>
            <person name="Francis M.D."/>
            <person name="Frankish A."/>
            <person name="Frankland J."/>
            <person name="French L."/>
            <person name="Garner P."/>
            <person name="Garnett J."/>
            <person name="Ghori M.J."/>
            <person name="Gilby L.M."/>
            <person name="Gillson C.J."/>
            <person name="Glithero R.J."/>
            <person name="Grafham D.V."/>
            <person name="Grant M."/>
            <person name="Gribble S."/>
            <person name="Griffiths C."/>
            <person name="Griffiths M.N.D."/>
            <person name="Hall R."/>
            <person name="Halls K.S."/>
            <person name="Hammond S."/>
            <person name="Harley J.L."/>
            <person name="Hart E.A."/>
            <person name="Heath P.D."/>
            <person name="Heathcott R."/>
            <person name="Holmes S.J."/>
            <person name="Howden P.J."/>
            <person name="Howe K.L."/>
            <person name="Howell G.R."/>
            <person name="Huckle E."/>
            <person name="Humphray S.J."/>
            <person name="Humphries M.D."/>
            <person name="Hunt A.R."/>
            <person name="Johnson C.M."/>
            <person name="Joy A.A."/>
            <person name="Kay M."/>
            <person name="Keenan S.J."/>
            <person name="Kimberley A.M."/>
            <person name="King A."/>
            <person name="Laird G.K."/>
            <person name="Langford C."/>
            <person name="Lawlor S."/>
            <person name="Leongamornlert D.A."/>
            <person name="Leversha M."/>
            <person name="Lloyd C.R."/>
            <person name="Lloyd D.M."/>
            <person name="Loveland J.E."/>
            <person name="Lovell J."/>
            <person name="Martin S."/>
            <person name="Mashreghi-Mohammadi M."/>
            <person name="Maslen G.L."/>
            <person name="Matthews L."/>
            <person name="McCann O.T."/>
            <person name="McLaren S.J."/>
            <person name="McLay K."/>
            <person name="McMurray A."/>
            <person name="Moore M.J.F."/>
            <person name="Mullikin J.C."/>
            <person name="Niblett D."/>
            <person name="Nickerson T."/>
            <person name="Novik K.L."/>
            <person name="Oliver K."/>
            <person name="Overton-Larty E.K."/>
            <person name="Parker A."/>
            <person name="Patel R."/>
            <person name="Pearce A.V."/>
            <person name="Peck A.I."/>
            <person name="Phillimore B.J.C.T."/>
            <person name="Phillips S."/>
            <person name="Plumb R.W."/>
            <person name="Porter K.M."/>
            <person name="Ramsey Y."/>
            <person name="Ranby S.A."/>
            <person name="Rice C.M."/>
            <person name="Ross M.T."/>
            <person name="Searle S.M."/>
            <person name="Sehra H.K."/>
            <person name="Sheridan E."/>
            <person name="Skuce C.D."/>
            <person name="Smith S."/>
            <person name="Smith M."/>
            <person name="Spraggon L."/>
            <person name="Squares S.L."/>
            <person name="Steward C.A."/>
            <person name="Sycamore N."/>
            <person name="Tamlyn-Hall G."/>
            <person name="Tester J."/>
            <person name="Theaker A.J."/>
            <person name="Thomas D.W."/>
            <person name="Thorpe A."/>
            <person name="Tracey A."/>
            <person name="Tromans A."/>
            <person name="Tubby B."/>
            <person name="Wall M."/>
            <person name="Wallis J.M."/>
            <person name="West A.P."/>
            <person name="White S.S."/>
            <person name="Whitehead S.L."/>
            <person name="Whittaker H."/>
            <person name="Wild A."/>
            <person name="Willey D.J."/>
            <person name="Wilmer T.E."/>
            <person name="Wood J.M."/>
            <person name="Wray P.W."/>
            <person name="Wyatt J.C."/>
            <person name="Young L."/>
            <person name="Younger R.M."/>
            <person name="Bentley D.R."/>
            <person name="Coulson A."/>
            <person name="Durbin R.M."/>
            <person name="Hubbard T."/>
            <person name="Sulston J.E."/>
            <person name="Dunham I."/>
            <person name="Rogers J."/>
            <person name="Beck S."/>
        </authorList>
    </citation>
    <scope>NUCLEOTIDE SEQUENCE [LARGE SCALE GENOMIC DNA]</scope>
</reference>
<reference key="2">
    <citation type="submission" date="2005-09" db="EMBL/GenBank/DDBJ databases">
        <authorList>
            <person name="Mural R.J."/>
            <person name="Istrail S."/>
            <person name="Sutton G.G."/>
            <person name="Florea L."/>
            <person name="Halpern A.L."/>
            <person name="Mobarry C.M."/>
            <person name="Lippert R."/>
            <person name="Walenz B."/>
            <person name="Shatkay H."/>
            <person name="Dew I."/>
            <person name="Miller J.R."/>
            <person name="Flanigan M.J."/>
            <person name="Edwards N.J."/>
            <person name="Bolanos R."/>
            <person name="Fasulo D."/>
            <person name="Halldorsson B.V."/>
            <person name="Hannenhalli S."/>
            <person name="Turner R."/>
            <person name="Yooseph S."/>
            <person name="Lu F."/>
            <person name="Nusskern D.R."/>
            <person name="Shue B.C."/>
            <person name="Zheng X.H."/>
            <person name="Zhong F."/>
            <person name="Delcher A.L."/>
            <person name="Huson D.H."/>
            <person name="Kravitz S.A."/>
            <person name="Mouchard L."/>
            <person name="Reinert K."/>
            <person name="Remington K.A."/>
            <person name="Clark A.G."/>
            <person name="Waterman M.S."/>
            <person name="Eichler E.E."/>
            <person name="Adams M.D."/>
            <person name="Hunkapiller M.W."/>
            <person name="Myers E.W."/>
            <person name="Venter J.C."/>
        </authorList>
    </citation>
    <scope>NUCLEOTIDE SEQUENCE [LARGE SCALE GENOMIC DNA]</scope>
</reference>
<reference key="3">
    <citation type="journal article" date="2004" name="Genome Res.">
        <title>The status, quality, and expansion of the NIH full-length cDNA project: the Mammalian Gene Collection (MGC).</title>
        <authorList>
            <consortium name="The MGC Project Team"/>
        </authorList>
    </citation>
    <scope>NUCLEOTIDE SEQUENCE [LARGE SCALE MRNA]</scope>
    <source>
        <tissue>Cerebellum</tissue>
    </source>
</reference>
<reference key="4">
    <citation type="journal article" date="2001" name="J. Biol. Chem.">
        <title>SIMPL is a tumor necrosis factor-specific regulator of nuclear factor-kappaB activity.</title>
        <authorList>
            <person name="Vig E."/>
            <person name="Green M."/>
            <person name="Liu Y."/>
            <person name="Yu K.-Y."/>
            <person name="Kwon H.-J."/>
            <person name="Tian J."/>
            <person name="Goebl M.G."/>
            <person name="Harrington M.A."/>
        </authorList>
    </citation>
    <scope>IDENTIFICATION</scope>
</reference>
<evidence type="ECO:0000250" key="1"/>
<evidence type="ECO:0000250" key="2">
    <source>
        <dbReference type="UniProtKB" id="Q9ESJ7"/>
    </source>
</evidence>
<evidence type="ECO:0000256" key="3">
    <source>
        <dbReference type="SAM" id="MobiDB-lite"/>
    </source>
</evidence>
<evidence type="ECO:0000305" key="4"/>
<protein>
    <recommendedName>
        <fullName>Interleukin-1 receptor-associated kinase 1-binding protein 1</fullName>
        <shortName>IRAK1-binding protein 1</shortName>
    </recommendedName>
</protein>
<proteinExistence type="evidence at protein level"/>
<sequence length="260" mass="29106">MSLQKTPPTRVFVELVPWADRSRENNLASGRETLPGLRHPLSSTQAQTATREVQVSGTSEVSAGPDRAQVVVRVSSTKEAAAEAKKSVCRRLDYITQSLQQQGVQAENITVTKDFRRVENAYHMEAEVCITFTEFGKMQNICNFLVEKLDSSVVISPPQFYHTPGSVENLRRQACLVAVENAWRKAQEVCNLVGQTLGKPLLIKEEETKEWEGQIDDHQSSRLSSSLTVQQKIKSATIHAASKVFITFEVKGKEKRKKHL</sequence>
<name>IKBP1_HUMAN</name>
<gene>
    <name type="primary">IRAK1BP1</name>
</gene>
<comment type="function">
    <text evidence="1">Component of the IRAK1-dependent TNFRSF1A signaling pathway that leads to NF-kappa-B activation and is required for cell survival. Acts by enhancing RELA transcriptional activity (By similarity).</text>
</comment>
<comment type="subunit">
    <text evidence="1">Interacts with IRAK1 and RELA. Interacts with HSPA8 and HSPA1 (By similarity).</text>
</comment>
<comment type="interaction">
    <interactant intactId="EBI-9658404">
        <id>Q5VVH5</id>
    </interactant>
    <interactant intactId="EBI-2555085">
        <id>Q8IVT2</id>
        <label>MISP</label>
    </interactant>
    <organismsDiffer>false</organismsDiffer>
    <experiments>3</experiments>
</comment>
<comment type="interaction">
    <interactant intactId="EBI-9658404">
        <id>Q5VVH5</id>
    </interactant>
    <interactant intactId="EBI-530034">
        <id>O43189</id>
        <label>PHF1</label>
    </interactant>
    <organismsDiffer>false</organismsDiffer>
    <experiments>3</experiments>
</comment>
<comment type="interaction">
    <interactant intactId="EBI-9658404">
        <id>Q5VVH5</id>
    </interactant>
    <interactant intactId="EBI-1053424">
        <id>O43741</id>
        <label>PRKAB2</label>
    </interactant>
    <organismsDiffer>false</organismsDiffer>
    <experiments>3</experiments>
</comment>
<comment type="interaction">
    <interactant intactId="EBI-9658404">
        <id>Q5VVH5</id>
    </interactant>
    <interactant intactId="EBI-10226430">
        <id>Q0D2K3</id>
        <label>RIPPLY1</label>
    </interactant>
    <organismsDiffer>false</organismsDiffer>
    <experiments>3</experiments>
</comment>
<comment type="interaction">
    <interactant intactId="EBI-9658404">
        <id>Q5VVH5</id>
    </interactant>
    <interactant intactId="EBI-748391">
        <id>Q9BWG6</id>
        <label>SCNM1</label>
    </interactant>
    <organismsDiffer>false</organismsDiffer>
    <experiments>3</experiments>
</comment>
<comment type="interaction">
    <interactant intactId="EBI-9658404">
        <id>Q5VVH5</id>
    </interactant>
    <interactant intactId="EBI-717422">
        <id>Q12800</id>
        <label>TFCP2</label>
    </interactant>
    <organismsDiffer>false</organismsDiffer>
    <experiments>3</experiments>
</comment>
<comment type="interaction">
    <interactant intactId="EBI-9658404">
        <id>Q5VVH5</id>
    </interactant>
    <interactant intactId="EBI-2511991">
        <id>Q9Y2K6</id>
        <label>USP20</label>
    </interactant>
    <organismsDiffer>false</organismsDiffer>
    <experiments>3</experiments>
</comment>
<comment type="interaction">
    <interactant intactId="EBI-9658404">
        <id>Q5VVH5</id>
    </interactant>
    <interactant intactId="EBI-11741890">
        <id>Q86VK4-3</id>
        <label>ZNF410</label>
    </interactant>
    <organismsDiffer>false</organismsDiffer>
    <experiments>3</experiments>
</comment>
<comment type="subcellular location">
    <subcellularLocation>
        <location evidence="1">Cytoplasm</location>
    </subcellularLocation>
    <subcellularLocation>
        <location evidence="1">Nucleus</location>
    </subcellularLocation>
</comment>
<comment type="domain">
    <text evidence="1">The disordered region interacts with HSPA1 and HSPA8.</text>
</comment>
<comment type="PTM">
    <text evidence="1">Phosphorylation at Ser-56 and/or Ser-62 is required for full activity. Phosphorylated on at least one of Ser-235, Thr-237, Ser-242 and Thr-247 upon TNF-alpha activation, which favors nuclear translocation (By similarity).</text>
</comment>
<comment type="similarity">
    <text evidence="4">Belongs to the IRAK1BP1 family.</text>
</comment>
<dbReference type="EMBL" id="AL450327">
    <property type="status" value="NOT_ANNOTATED_CDS"/>
    <property type="molecule type" value="Genomic_DNA"/>
</dbReference>
<dbReference type="EMBL" id="CH471051">
    <property type="protein sequence ID" value="EAW48721.1"/>
    <property type="molecule type" value="Genomic_DNA"/>
</dbReference>
<dbReference type="EMBL" id="BC112253">
    <property type="protein sequence ID" value="AAI12254.1"/>
    <property type="molecule type" value="mRNA"/>
</dbReference>
<dbReference type="EMBL" id="BC112255">
    <property type="protein sequence ID" value="AAI12256.1"/>
    <property type="molecule type" value="mRNA"/>
</dbReference>
<dbReference type="CCDS" id="CCDS34488.1"/>
<dbReference type="RefSeq" id="NP_001010844.1">
    <property type="nucleotide sequence ID" value="NM_001010844.4"/>
</dbReference>
<dbReference type="SMR" id="Q5VVH5"/>
<dbReference type="BioGRID" id="126412">
    <property type="interactions" value="16"/>
</dbReference>
<dbReference type="FunCoup" id="Q5VVH5">
    <property type="interactions" value="355"/>
</dbReference>
<dbReference type="IntAct" id="Q5VVH5">
    <property type="interactions" value="13"/>
</dbReference>
<dbReference type="STRING" id="9606.ENSP00000358956"/>
<dbReference type="iPTMnet" id="Q5VVH5"/>
<dbReference type="PhosphoSitePlus" id="Q5VVH5"/>
<dbReference type="BioMuta" id="IRAK1BP1"/>
<dbReference type="DMDM" id="74747244"/>
<dbReference type="jPOST" id="Q5VVH5"/>
<dbReference type="MassIVE" id="Q5VVH5"/>
<dbReference type="PaxDb" id="9606-ENSP00000358956"/>
<dbReference type="PeptideAtlas" id="Q5VVH5"/>
<dbReference type="ProteomicsDB" id="65465"/>
<dbReference type="Antibodypedia" id="31572">
    <property type="antibodies" value="88 antibodies from 19 providers"/>
</dbReference>
<dbReference type="DNASU" id="134728"/>
<dbReference type="Ensembl" id="ENST00000369940.7">
    <property type="protein sequence ID" value="ENSP00000358956.1"/>
    <property type="gene ID" value="ENSG00000146243.14"/>
</dbReference>
<dbReference type="GeneID" id="134728"/>
<dbReference type="KEGG" id="hsa:134728"/>
<dbReference type="MANE-Select" id="ENST00000369940.7">
    <property type="protein sequence ID" value="ENSP00000358956.1"/>
    <property type="RefSeq nucleotide sequence ID" value="NM_001010844.4"/>
    <property type="RefSeq protein sequence ID" value="NP_001010844.1"/>
</dbReference>
<dbReference type="UCSC" id="uc003pim.6">
    <property type="organism name" value="human"/>
</dbReference>
<dbReference type="AGR" id="HGNC:17368"/>
<dbReference type="CTD" id="134728"/>
<dbReference type="DisGeNET" id="134728"/>
<dbReference type="GeneCards" id="IRAK1BP1"/>
<dbReference type="HGNC" id="HGNC:17368">
    <property type="gene designation" value="IRAK1BP1"/>
</dbReference>
<dbReference type="HPA" id="ENSG00000146243">
    <property type="expression patterns" value="Low tissue specificity"/>
</dbReference>
<dbReference type="MalaCards" id="IRAK1BP1"/>
<dbReference type="MIM" id="615375">
    <property type="type" value="gene"/>
</dbReference>
<dbReference type="neXtProt" id="NX_Q5VVH5"/>
<dbReference type="OpenTargets" id="ENSG00000146243"/>
<dbReference type="PharmGKB" id="PA134919096"/>
<dbReference type="VEuPathDB" id="HostDB:ENSG00000146243"/>
<dbReference type="eggNOG" id="ENOG502QVHT">
    <property type="taxonomic scope" value="Eukaryota"/>
</dbReference>
<dbReference type="GeneTree" id="ENSGT00390000012588"/>
<dbReference type="HOGENOM" id="CLU_066454_0_0_1"/>
<dbReference type="InParanoid" id="Q5VVH5"/>
<dbReference type="OMA" id="TQTATRE"/>
<dbReference type="OrthoDB" id="6365554at2759"/>
<dbReference type="PAN-GO" id="Q5VVH5">
    <property type="GO annotations" value="1 GO annotation based on evolutionary models"/>
</dbReference>
<dbReference type="PhylomeDB" id="Q5VVH5"/>
<dbReference type="TreeFam" id="TF328455"/>
<dbReference type="PathwayCommons" id="Q5VVH5"/>
<dbReference type="SignaLink" id="Q5VVH5"/>
<dbReference type="BioGRID-ORCS" id="134728">
    <property type="hits" value="6 hits in 1088 CRISPR screens"/>
</dbReference>
<dbReference type="ChiTaRS" id="IRAK1BP1">
    <property type="organism name" value="human"/>
</dbReference>
<dbReference type="GenomeRNAi" id="134728"/>
<dbReference type="Pharos" id="Q5VVH5">
    <property type="development level" value="Tbio"/>
</dbReference>
<dbReference type="PRO" id="PR:Q5VVH5"/>
<dbReference type="Proteomes" id="UP000005640">
    <property type="component" value="Chromosome 6"/>
</dbReference>
<dbReference type="RNAct" id="Q5VVH5">
    <property type="molecule type" value="protein"/>
</dbReference>
<dbReference type="Bgee" id="ENSG00000146243">
    <property type="expression patterns" value="Expressed in oocyte and 153 other cell types or tissues"/>
</dbReference>
<dbReference type="ExpressionAtlas" id="Q5VVH5">
    <property type="expression patterns" value="baseline and differential"/>
</dbReference>
<dbReference type="GO" id="GO:0005737">
    <property type="term" value="C:cytoplasm"/>
    <property type="evidence" value="ECO:0007669"/>
    <property type="project" value="UniProtKB-SubCell"/>
</dbReference>
<dbReference type="GO" id="GO:0005634">
    <property type="term" value="C:nucleus"/>
    <property type="evidence" value="ECO:0007669"/>
    <property type="project" value="UniProtKB-SubCell"/>
</dbReference>
<dbReference type="GO" id="GO:0035591">
    <property type="term" value="F:signaling adaptor activity"/>
    <property type="evidence" value="ECO:0007669"/>
    <property type="project" value="Ensembl"/>
</dbReference>
<dbReference type="GO" id="GO:0006955">
    <property type="term" value="P:immune response"/>
    <property type="evidence" value="ECO:0007669"/>
    <property type="project" value="InterPro"/>
</dbReference>
<dbReference type="GO" id="GO:0043123">
    <property type="term" value="P:positive regulation of canonical NF-kappaB signal transduction"/>
    <property type="evidence" value="ECO:0000250"/>
    <property type="project" value="UniProtKB"/>
</dbReference>
<dbReference type="FunFam" id="3.30.110.170:FF:000002">
    <property type="entry name" value="Interleukin-1 receptor-associated kinase 1-binding protein 1"/>
    <property type="match status" value="1"/>
</dbReference>
<dbReference type="FunFam" id="3.30.70.2970:FF:000002">
    <property type="entry name" value="interleukin-1 receptor-associated kinase 1-binding protein 1"/>
    <property type="match status" value="1"/>
</dbReference>
<dbReference type="Gene3D" id="3.30.110.170">
    <property type="entry name" value="Protein of unknown function (DUF541), domain 1"/>
    <property type="match status" value="1"/>
</dbReference>
<dbReference type="Gene3D" id="3.30.70.2970">
    <property type="entry name" value="Protein of unknown function (DUF541), domain 2"/>
    <property type="match status" value="1"/>
</dbReference>
<dbReference type="InterPro" id="IPR030312">
    <property type="entry name" value="IRAK1BP1"/>
</dbReference>
<dbReference type="InterPro" id="IPR007497">
    <property type="entry name" value="SIMPL/DUF541"/>
</dbReference>
<dbReference type="PANTHER" id="PTHR18842">
    <property type="entry name" value="INTERLEUKIN-1 RECEPTOR-ASSOCIATED KINASE 1-BINDING PROTEIN 1"/>
    <property type="match status" value="1"/>
</dbReference>
<dbReference type="PANTHER" id="PTHR18842:SF2">
    <property type="entry name" value="INTERLEUKIN-1 RECEPTOR-ASSOCIATED KINASE 1-BINDING PROTEIN 1"/>
    <property type="match status" value="1"/>
</dbReference>
<dbReference type="Pfam" id="PF04402">
    <property type="entry name" value="SIMPL"/>
    <property type="match status" value="1"/>
</dbReference>
<accession>Q5VVH5</accession>
<keyword id="KW-0963">Cytoplasm</keyword>
<keyword id="KW-0539">Nucleus</keyword>
<keyword id="KW-0597">Phosphoprotein</keyword>
<keyword id="KW-1267">Proteomics identification</keyword>
<keyword id="KW-1185">Reference proteome</keyword>
<keyword id="KW-0804">Transcription</keyword>
<keyword id="KW-0805">Transcription regulation</keyword>
<organism>
    <name type="scientific">Homo sapiens</name>
    <name type="common">Human</name>
    <dbReference type="NCBI Taxonomy" id="9606"/>
    <lineage>
        <taxon>Eukaryota</taxon>
        <taxon>Metazoa</taxon>
        <taxon>Chordata</taxon>
        <taxon>Craniata</taxon>
        <taxon>Vertebrata</taxon>
        <taxon>Euteleostomi</taxon>
        <taxon>Mammalia</taxon>
        <taxon>Eutheria</taxon>
        <taxon>Euarchontoglires</taxon>
        <taxon>Primates</taxon>
        <taxon>Haplorrhini</taxon>
        <taxon>Catarrhini</taxon>
        <taxon>Hominidae</taxon>
        <taxon>Homo</taxon>
    </lineage>
</organism>
<feature type="chain" id="PRO_0000313733" description="Interleukin-1 receptor-associated kinase 1-binding protein 1">
    <location>
        <begin position="1"/>
        <end position="260"/>
    </location>
</feature>
<feature type="region of interest" description="Disordered" evidence="3">
    <location>
        <begin position="30"/>
        <end position="50"/>
    </location>
</feature>
<feature type="region of interest" description="Required for nuclear localization (NLS)" evidence="1">
    <location>
        <begin position="240"/>
        <end position="260"/>
    </location>
</feature>
<feature type="compositionally biased region" description="Polar residues" evidence="3">
    <location>
        <begin position="41"/>
        <end position="50"/>
    </location>
</feature>
<feature type="modified residue" description="Phosphoserine" evidence="2">
    <location>
        <position position="56"/>
    </location>
</feature>
<feature type="modified residue" description="Phosphoserine" evidence="2">
    <location>
        <position position="62"/>
    </location>
</feature>
<feature type="modified residue" description="Phosphoserine" evidence="2">
    <location>
        <position position="235"/>
    </location>
</feature>
<feature type="modified residue" description="Phosphothreonine" evidence="2">
    <location>
        <position position="237"/>
    </location>
</feature>
<feature type="modified residue" description="Phosphoserine" evidence="2">
    <location>
        <position position="242"/>
    </location>
</feature>
<feature type="modified residue" description="Phosphothreonine" evidence="2">
    <location>
        <position position="247"/>
    </location>
</feature>